<protein>
    <recommendedName>
        <fullName evidence="1">Large ribosomal subunit protein bL28</fullName>
    </recommendedName>
    <alternativeName>
        <fullName evidence="2">50S ribosomal protein L28</fullName>
    </alternativeName>
</protein>
<accession>A3DEY2</accession>
<dbReference type="EMBL" id="CP000568">
    <property type="protein sequence ID" value="ABN52511.1"/>
    <property type="molecule type" value="Genomic_DNA"/>
</dbReference>
<dbReference type="RefSeq" id="WP_003517507.1">
    <property type="nucleotide sequence ID" value="NC_009012.1"/>
</dbReference>
<dbReference type="SMR" id="A3DEY2"/>
<dbReference type="STRING" id="203119.Cthe_1279"/>
<dbReference type="GeneID" id="35805864"/>
<dbReference type="KEGG" id="cth:Cthe_1279"/>
<dbReference type="eggNOG" id="COG0227">
    <property type="taxonomic scope" value="Bacteria"/>
</dbReference>
<dbReference type="HOGENOM" id="CLU_064548_7_0_9"/>
<dbReference type="OrthoDB" id="9805609at2"/>
<dbReference type="Proteomes" id="UP000002145">
    <property type="component" value="Chromosome"/>
</dbReference>
<dbReference type="GO" id="GO:1990904">
    <property type="term" value="C:ribonucleoprotein complex"/>
    <property type="evidence" value="ECO:0007669"/>
    <property type="project" value="UniProtKB-KW"/>
</dbReference>
<dbReference type="GO" id="GO:0005840">
    <property type="term" value="C:ribosome"/>
    <property type="evidence" value="ECO:0007669"/>
    <property type="project" value="UniProtKB-KW"/>
</dbReference>
<dbReference type="GO" id="GO:0003735">
    <property type="term" value="F:structural constituent of ribosome"/>
    <property type="evidence" value="ECO:0007669"/>
    <property type="project" value="InterPro"/>
</dbReference>
<dbReference type="GO" id="GO:0006412">
    <property type="term" value="P:translation"/>
    <property type="evidence" value="ECO:0007669"/>
    <property type="project" value="UniProtKB-UniRule"/>
</dbReference>
<dbReference type="Gene3D" id="2.30.170.40">
    <property type="entry name" value="Ribosomal protein L28/L24"/>
    <property type="match status" value="1"/>
</dbReference>
<dbReference type="HAMAP" id="MF_00373">
    <property type="entry name" value="Ribosomal_bL28"/>
    <property type="match status" value="1"/>
</dbReference>
<dbReference type="InterPro" id="IPR050096">
    <property type="entry name" value="Bacterial_rp_bL28"/>
</dbReference>
<dbReference type="InterPro" id="IPR026569">
    <property type="entry name" value="Ribosomal_bL28"/>
</dbReference>
<dbReference type="InterPro" id="IPR034704">
    <property type="entry name" value="Ribosomal_bL28/bL31-like_sf"/>
</dbReference>
<dbReference type="InterPro" id="IPR001383">
    <property type="entry name" value="Ribosomal_bL28_bact-type"/>
</dbReference>
<dbReference type="InterPro" id="IPR037147">
    <property type="entry name" value="Ribosomal_bL28_sf"/>
</dbReference>
<dbReference type="NCBIfam" id="TIGR00009">
    <property type="entry name" value="L28"/>
    <property type="match status" value="1"/>
</dbReference>
<dbReference type="PANTHER" id="PTHR39080">
    <property type="entry name" value="50S RIBOSOMAL PROTEIN L28"/>
    <property type="match status" value="1"/>
</dbReference>
<dbReference type="PANTHER" id="PTHR39080:SF1">
    <property type="entry name" value="LARGE RIBOSOMAL SUBUNIT PROTEIN BL28A"/>
    <property type="match status" value="1"/>
</dbReference>
<dbReference type="Pfam" id="PF00830">
    <property type="entry name" value="Ribosomal_L28"/>
    <property type="match status" value="1"/>
</dbReference>
<dbReference type="SUPFAM" id="SSF143800">
    <property type="entry name" value="L28p-like"/>
    <property type="match status" value="1"/>
</dbReference>
<feature type="chain" id="PRO_1000007218" description="Large ribosomal subunit protein bL28">
    <location>
        <begin position="1"/>
        <end position="62"/>
    </location>
</feature>
<comment type="similarity">
    <text evidence="1">Belongs to the bacterial ribosomal protein bL28 family.</text>
</comment>
<keyword id="KW-1185">Reference proteome</keyword>
<keyword id="KW-0687">Ribonucleoprotein</keyword>
<keyword id="KW-0689">Ribosomal protein</keyword>
<reference key="1">
    <citation type="submission" date="2007-02" db="EMBL/GenBank/DDBJ databases">
        <title>Complete sequence of Clostridium thermocellum ATCC 27405.</title>
        <authorList>
            <consortium name="US DOE Joint Genome Institute"/>
            <person name="Copeland A."/>
            <person name="Lucas S."/>
            <person name="Lapidus A."/>
            <person name="Barry K."/>
            <person name="Detter J.C."/>
            <person name="Glavina del Rio T."/>
            <person name="Hammon N."/>
            <person name="Israni S."/>
            <person name="Dalin E."/>
            <person name="Tice H."/>
            <person name="Pitluck S."/>
            <person name="Chertkov O."/>
            <person name="Brettin T."/>
            <person name="Bruce D."/>
            <person name="Han C."/>
            <person name="Tapia R."/>
            <person name="Gilna P."/>
            <person name="Schmutz J."/>
            <person name="Larimer F."/>
            <person name="Land M."/>
            <person name="Hauser L."/>
            <person name="Kyrpides N."/>
            <person name="Mikhailova N."/>
            <person name="Wu J.H.D."/>
            <person name="Newcomb M."/>
            <person name="Richardson P."/>
        </authorList>
    </citation>
    <scope>NUCLEOTIDE SEQUENCE [LARGE SCALE GENOMIC DNA]</scope>
    <source>
        <strain>ATCC 27405 / DSM 1237 / JCM 9322 / NBRC 103400 / NCIMB 10682 / NRRL B-4536 / VPI 7372</strain>
    </source>
</reference>
<gene>
    <name evidence="1" type="primary">rpmB</name>
    <name type="ordered locus">Cthe_1279</name>
</gene>
<sequence>MAKCDICSKDVLFGLKVSHSNRKTNRTWKPNIRRIKIIENGTSKTANVCTRCLRSNKVTRAI</sequence>
<organism>
    <name type="scientific">Acetivibrio thermocellus (strain ATCC 27405 / DSM 1237 / JCM 9322 / NBRC 103400 / NCIMB 10682 / NRRL B-4536 / VPI 7372)</name>
    <name type="common">Clostridium thermocellum</name>
    <dbReference type="NCBI Taxonomy" id="203119"/>
    <lineage>
        <taxon>Bacteria</taxon>
        <taxon>Bacillati</taxon>
        <taxon>Bacillota</taxon>
        <taxon>Clostridia</taxon>
        <taxon>Eubacteriales</taxon>
        <taxon>Oscillospiraceae</taxon>
        <taxon>Acetivibrio</taxon>
    </lineage>
</organism>
<evidence type="ECO:0000255" key="1">
    <source>
        <dbReference type="HAMAP-Rule" id="MF_00373"/>
    </source>
</evidence>
<evidence type="ECO:0000305" key="2"/>
<proteinExistence type="inferred from homology"/>
<name>RL28_ACET2</name>